<comment type="function">
    <text>May be involved in transcriptional regulation.</text>
</comment>
<comment type="subcellular location">
    <subcellularLocation>
        <location evidence="4">Nucleus</location>
    </subcellularLocation>
</comment>
<comment type="similarity">
    <text evidence="4">Belongs to the krueppel C2H2-type zinc-finger protein family.</text>
</comment>
<evidence type="ECO:0000250" key="1">
    <source>
        <dbReference type="UniProtKB" id="Q6ZN55"/>
    </source>
</evidence>
<evidence type="ECO:0000255" key="2">
    <source>
        <dbReference type="PROSITE-ProRule" id="PRU00042"/>
    </source>
</evidence>
<evidence type="ECO:0000256" key="3">
    <source>
        <dbReference type="SAM" id="MobiDB-lite"/>
    </source>
</evidence>
<evidence type="ECO:0000305" key="4"/>
<dbReference type="EMBL" id="BC094953">
    <property type="protein sequence ID" value="AAH94953.1"/>
    <property type="molecule type" value="mRNA"/>
</dbReference>
<dbReference type="RefSeq" id="NP_001019429.1">
    <property type="nucleotide sequence ID" value="NM_001024258.1"/>
</dbReference>
<dbReference type="RefSeq" id="XP_008757152.1">
    <property type="nucleotide sequence ID" value="XM_008758930.1"/>
</dbReference>
<dbReference type="RefSeq" id="XP_008757153.1">
    <property type="nucleotide sequence ID" value="XM_008758931.2"/>
</dbReference>
<dbReference type="SMR" id="Q504L7"/>
<dbReference type="FunCoup" id="Q504L7">
    <property type="interactions" value="1084"/>
</dbReference>
<dbReference type="STRING" id="10116.ENSRNOP00000070796"/>
<dbReference type="GlyGen" id="Q504L7">
    <property type="glycosylation" value="1 site"/>
</dbReference>
<dbReference type="PhosphoSitePlus" id="Q504L7"/>
<dbReference type="PaxDb" id="10116-ENSRNOP00000061367"/>
<dbReference type="Ensembl" id="ENSRNOT00000079847.2">
    <property type="protein sequence ID" value="ENSRNOP00000070796.1"/>
    <property type="gene ID" value="ENSRNOG00000055761.2"/>
</dbReference>
<dbReference type="Ensembl" id="ENSRNOT00000096464.1">
    <property type="protein sequence ID" value="ENSRNOP00000083524.1"/>
    <property type="gene ID" value="ENSRNOG00000055761.2"/>
</dbReference>
<dbReference type="Ensembl" id="ENSRNOT00000100383.1">
    <property type="protein sequence ID" value="ENSRNOP00000097450.1"/>
    <property type="gene ID" value="ENSRNOG00000055761.2"/>
</dbReference>
<dbReference type="Ensembl" id="ENSRNOT00000109238.1">
    <property type="protein sequence ID" value="ENSRNOP00000097321.1"/>
    <property type="gene ID" value="ENSRNOG00000055761.2"/>
</dbReference>
<dbReference type="Ensembl" id="ENSRNOT00000110459.1">
    <property type="protein sequence ID" value="ENSRNOP00000089598.1"/>
    <property type="gene ID" value="ENSRNOG00000055761.2"/>
</dbReference>
<dbReference type="Ensembl" id="ENSRNOT00000116503.1">
    <property type="protein sequence ID" value="ENSRNOP00000082869.1"/>
    <property type="gene ID" value="ENSRNOG00000055761.2"/>
</dbReference>
<dbReference type="GeneID" id="308434"/>
<dbReference type="KEGG" id="rno:308434"/>
<dbReference type="UCSC" id="RGD:1311420">
    <property type="organism name" value="rat"/>
</dbReference>
<dbReference type="AGR" id="RGD:1311420"/>
<dbReference type="CTD" id="232976"/>
<dbReference type="RGD" id="1311420">
    <property type="gene designation" value="Zfp574"/>
</dbReference>
<dbReference type="eggNOG" id="KOG1721">
    <property type="taxonomic scope" value="Eukaryota"/>
</dbReference>
<dbReference type="GeneTree" id="ENSGT00940000161799"/>
<dbReference type="HOGENOM" id="CLU_002678_24_1_1"/>
<dbReference type="InParanoid" id="Q504L7"/>
<dbReference type="OMA" id="DCAKPFN"/>
<dbReference type="OrthoDB" id="8922241at2759"/>
<dbReference type="PhylomeDB" id="Q504L7"/>
<dbReference type="TreeFam" id="TF350791"/>
<dbReference type="PRO" id="PR:Q504L7"/>
<dbReference type="Proteomes" id="UP000002494">
    <property type="component" value="Chromosome 1"/>
</dbReference>
<dbReference type="Bgee" id="ENSRNOG00000055761">
    <property type="expression patterns" value="Expressed in testis and 20 other cell types or tissues"/>
</dbReference>
<dbReference type="GO" id="GO:0005634">
    <property type="term" value="C:nucleus"/>
    <property type="evidence" value="ECO:0000318"/>
    <property type="project" value="GO_Central"/>
</dbReference>
<dbReference type="GO" id="GO:0003677">
    <property type="term" value="F:DNA binding"/>
    <property type="evidence" value="ECO:0007669"/>
    <property type="project" value="UniProtKB-KW"/>
</dbReference>
<dbReference type="GO" id="GO:0008270">
    <property type="term" value="F:zinc ion binding"/>
    <property type="evidence" value="ECO:0007669"/>
    <property type="project" value="UniProtKB-KW"/>
</dbReference>
<dbReference type="GO" id="GO:0006357">
    <property type="term" value="P:regulation of transcription by RNA polymerase II"/>
    <property type="evidence" value="ECO:0000318"/>
    <property type="project" value="GO_Central"/>
</dbReference>
<dbReference type="FunFam" id="3.30.160.60:FF:000145">
    <property type="entry name" value="Zinc finger protein 574"/>
    <property type="match status" value="1"/>
</dbReference>
<dbReference type="FunFam" id="3.30.160.60:FF:000202">
    <property type="entry name" value="Zinc finger protein 574"/>
    <property type="match status" value="1"/>
</dbReference>
<dbReference type="FunFam" id="3.30.160.60:FF:000788">
    <property type="entry name" value="Zinc finger protein 574"/>
    <property type="match status" value="1"/>
</dbReference>
<dbReference type="FunFam" id="3.30.160.60:FF:001231">
    <property type="entry name" value="Zinc finger protein 574"/>
    <property type="match status" value="1"/>
</dbReference>
<dbReference type="FunFam" id="3.30.160.60:FF:000381">
    <property type="entry name" value="zinc finger protein 574"/>
    <property type="match status" value="3"/>
</dbReference>
<dbReference type="FunFam" id="3.30.160.60:FF:001169">
    <property type="entry name" value="zinc finger protein 574"/>
    <property type="match status" value="1"/>
</dbReference>
<dbReference type="FunFam" id="3.30.160.60:FF:001184">
    <property type="entry name" value="zinc finger protein 574"/>
    <property type="match status" value="1"/>
</dbReference>
<dbReference type="FunFam" id="3.30.160.60:FF:001285">
    <property type="entry name" value="zinc finger protein 574"/>
    <property type="match status" value="1"/>
</dbReference>
<dbReference type="Gene3D" id="3.30.160.60">
    <property type="entry name" value="Classic Zinc Finger"/>
    <property type="match status" value="13"/>
</dbReference>
<dbReference type="InterPro" id="IPR036236">
    <property type="entry name" value="Znf_C2H2_sf"/>
</dbReference>
<dbReference type="InterPro" id="IPR013087">
    <property type="entry name" value="Znf_C2H2_type"/>
</dbReference>
<dbReference type="PANTHER" id="PTHR24379:SF121">
    <property type="entry name" value="C2H2-TYPE DOMAIN-CONTAINING PROTEIN"/>
    <property type="match status" value="1"/>
</dbReference>
<dbReference type="PANTHER" id="PTHR24379">
    <property type="entry name" value="KRAB AND ZINC FINGER DOMAIN-CONTAINING"/>
    <property type="match status" value="1"/>
</dbReference>
<dbReference type="Pfam" id="PF00096">
    <property type="entry name" value="zf-C2H2"/>
    <property type="match status" value="6"/>
</dbReference>
<dbReference type="Pfam" id="PF13912">
    <property type="entry name" value="zf-C2H2_6"/>
    <property type="match status" value="2"/>
</dbReference>
<dbReference type="Pfam" id="PF12874">
    <property type="entry name" value="zf-met"/>
    <property type="match status" value="1"/>
</dbReference>
<dbReference type="SMART" id="SM00355">
    <property type="entry name" value="ZnF_C2H2"/>
    <property type="match status" value="20"/>
</dbReference>
<dbReference type="SUPFAM" id="SSF57667">
    <property type="entry name" value="beta-beta-alpha zinc fingers"/>
    <property type="match status" value="11"/>
</dbReference>
<dbReference type="PROSITE" id="PS00028">
    <property type="entry name" value="ZINC_FINGER_C2H2_1"/>
    <property type="match status" value="18"/>
</dbReference>
<dbReference type="PROSITE" id="PS50157">
    <property type="entry name" value="ZINC_FINGER_C2H2_2"/>
    <property type="match status" value="19"/>
</dbReference>
<sequence length="898" mass="99355">MTEESEETVLYIEHRYVCSECNQLYGSLEEVLVHQNSHVPQQHFELVGVADPGVTVATEATSGTGLYQTLIQESQYQCLECGQLLLSPSQLLEHQELHLKMMAPQEAVPAEPPPKVPPLSSSTIHYECVDCKALFASQEMWLSHRQTHLRATPNKAPAPVVLGSPVVLGPPVGQARVAVEHSYRKAEEGGEGAAVPSVAAATEMVTEVELLLYKCSECSQLFQMPADFLEHQATHFPAPVPEAEEPATQQETLVPSPTEAAVSQPDPLPASDHSYELRNELRNGEAMGRDRRGRKPRRSSSGESGATQELFCSACDQIFLSPHQLQQHLRSHREGVFKCPLCSRVFPSPSSLDQHLGDHSSESHFLCVDCGLAFGTEALLLAHRRAHTPNPLHSCPCGKTFVNLTKFLYHRRTHGAGGVPLPTTPVPPEEPAISFPEPAPAETGELEAPELPVSEESSAEPAAPGTYRCLLCSREFSKALQLTRHQRFVHRLERRHKCSICGKMFKKKSHVRNHLRTHTGERPFPCPDCSKPFNSPANLARHRLTHTGERPYRCGDCGKAFTQSSTLRQHRLVHAQHFPYRCQECGVRFHRPYRLLMHRYHHTGEYPYKCRECPRSFLLRRLLEVHQLVVHAGRQPHRCPSCGAAFPSSLRLREHRCAAAAAQAPRRFECGTCGKKVGSAARLQAHEAAHAAAGPGEVLAKEPPAPRAARATRTPVAPSPTALGGTTSAAPAAPARRRGLECSECKKLFSTETSLQVHRRIHTGERPYPCPDCGKAFRQSTHLKDHRRLHTGERPFACEVCGKAFAISMRLAEHRRIHTGERPYSCPDCGKSYRSFSNLWKHRKTHQQQHQAAVRQQLAEAEAAVGLAVMETAVEALPLVEAIEIYPLAEADGVQISG</sequence>
<feature type="chain" id="PRO_0000274865" description="Zinc finger protein 574">
    <location>
        <begin position="1"/>
        <end position="898"/>
    </location>
</feature>
<feature type="zinc finger region" description="C2H2-type 1" evidence="2">
    <location>
        <begin position="16"/>
        <end position="38"/>
    </location>
</feature>
<feature type="zinc finger region" description="C2H2-type 2" evidence="2">
    <location>
        <begin position="76"/>
        <end position="98"/>
    </location>
</feature>
<feature type="zinc finger region" description="C2H2-type 3" evidence="2">
    <location>
        <begin position="126"/>
        <end position="148"/>
    </location>
</feature>
<feature type="zinc finger region" description="C2H2-type 4" evidence="2">
    <location>
        <begin position="213"/>
        <end position="235"/>
    </location>
</feature>
<feature type="zinc finger region" description="C2H2-type 5" evidence="2">
    <location>
        <begin position="310"/>
        <end position="332"/>
    </location>
</feature>
<feature type="zinc finger region" description="C2H2-type 6" evidence="2">
    <location>
        <begin position="337"/>
        <end position="359"/>
    </location>
</feature>
<feature type="zinc finger region" description="C2H2-type 7" evidence="2">
    <location>
        <begin position="365"/>
        <end position="387"/>
    </location>
</feature>
<feature type="zinc finger region" description="C2H2-type 8" evidence="2">
    <location>
        <begin position="393"/>
        <end position="414"/>
    </location>
</feature>
<feature type="zinc finger region" description="C2H2-type 9" evidence="2">
    <location>
        <begin position="467"/>
        <end position="490"/>
    </location>
</feature>
<feature type="zinc finger region" description="C2H2-type 10" evidence="2">
    <location>
        <begin position="496"/>
        <end position="518"/>
    </location>
</feature>
<feature type="zinc finger region" description="C2H2-type 11" evidence="2">
    <location>
        <begin position="524"/>
        <end position="546"/>
    </location>
</feature>
<feature type="zinc finger region" description="C2H2-type 12" evidence="2">
    <location>
        <begin position="552"/>
        <end position="574"/>
    </location>
</feature>
<feature type="zinc finger region" description="C2H2-type 13" evidence="2">
    <location>
        <begin position="580"/>
        <end position="602"/>
    </location>
</feature>
<feature type="zinc finger region" description="C2H2-type 14" evidence="2">
    <location>
        <begin position="608"/>
        <end position="631"/>
    </location>
</feature>
<feature type="zinc finger region" description="C2H2-type 15; degenerate" evidence="2">
    <location>
        <begin position="637"/>
        <end position="660"/>
    </location>
</feature>
<feature type="zinc finger region" description="C2H2-type 16" evidence="2">
    <location>
        <begin position="668"/>
        <end position="690"/>
    </location>
</feature>
<feature type="zinc finger region" description="C2H2-type 17" evidence="2">
    <location>
        <begin position="740"/>
        <end position="762"/>
    </location>
</feature>
<feature type="zinc finger region" description="C2H2-type 18" evidence="2">
    <location>
        <begin position="768"/>
        <end position="790"/>
    </location>
</feature>
<feature type="zinc finger region" description="C2H2-type 19" evidence="2">
    <location>
        <begin position="796"/>
        <end position="818"/>
    </location>
</feature>
<feature type="zinc finger region" description="C2H2-type 20" evidence="2">
    <location>
        <begin position="824"/>
        <end position="846"/>
    </location>
</feature>
<feature type="region of interest" description="Disordered" evidence="3">
    <location>
        <begin position="243"/>
        <end position="305"/>
    </location>
</feature>
<feature type="region of interest" description="Disordered" evidence="3">
    <location>
        <begin position="417"/>
        <end position="460"/>
    </location>
</feature>
<feature type="region of interest" description="Disordered" evidence="3">
    <location>
        <begin position="691"/>
        <end position="735"/>
    </location>
</feature>
<feature type="compositionally biased region" description="Basic and acidic residues" evidence="3">
    <location>
        <begin position="273"/>
        <end position="290"/>
    </location>
</feature>
<feature type="compositionally biased region" description="Low complexity" evidence="3">
    <location>
        <begin position="707"/>
        <end position="734"/>
    </location>
</feature>
<feature type="modified residue" description="Phosphoserine" evidence="1">
    <location>
        <position position="164"/>
    </location>
</feature>
<feature type="modified residue" description="Phosphoserine" evidence="1">
    <location>
        <position position="301"/>
    </location>
</feature>
<feature type="modified residue" description="Phosphoserine" evidence="1">
    <location>
        <position position="719"/>
    </location>
</feature>
<feature type="modified residue" description="Phosphothreonine" evidence="1">
    <location>
        <position position="726"/>
    </location>
</feature>
<feature type="modified residue" description="Asymmetric dimethylarginine" evidence="1">
    <location>
        <position position="834"/>
    </location>
</feature>
<accession>Q504L7</accession>
<proteinExistence type="evidence at transcript level"/>
<gene>
    <name type="primary">Znf574</name>
    <name type="synonym">Zfp574</name>
</gene>
<reference key="1">
    <citation type="journal article" date="2004" name="Genome Res.">
        <title>The status, quality, and expansion of the NIH full-length cDNA project: the Mammalian Gene Collection (MGC).</title>
        <authorList>
            <consortium name="The MGC Project Team"/>
        </authorList>
    </citation>
    <scope>NUCLEOTIDE SEQUENCE [LARGE SCALE MRNA]</scope>
    <source>
        <tissue>Ovary</tissue>
    </source>
</reference>
<organism>
    <name type="scientific">Rattus norvegicus</name>
    <name type="common">Rat</name>
    <dbReference type="NCBI Taxonomy" id="10116"/>
    <lineage>
        <taxon>Eukaryota</taxon>
        <taxon>Metazoa</taxon>
        <taxon>Chordata</taxon>
        <taxon>Craniata</taxon>
        <taxon>Vertebrata</taxon>
        <taxon>Euteleostomi</taxon>
        <taxon>Mammalia</taxon>
        <taxon>Eutheria</taxon>
        <taxon>Euarchontoglires</taxon>
        <taxon>Glires</taxon>
        <taxon>Rodentia</taxon>
        <taxon>Myomorpha</taxon>
        <taxon>Muroidea</taxon>
        <taxon>Muridae</taxon>
        <taxon>Murinae</taxon>
        <taxon>Rattus</taxon>
    </lineage>
</organism>
<name>ZN574_RAT</name>
<keyword id="KW-0238">DNA-binding</keyword>
<keyword id="KW-0479">Metal-binding</keyword>
<keyword id="KW-0488">Methylation</keyword>
<keyword id="KW-0539">Nucleus</keyword>
<keyword id="KW-0597">Phosphoprotein</keyword>
<keyword id="KW-1185">Reference proteome</keyword>
<keyword id="KW-0677">Repeat</keyword>
<keyword id="KW-0804">Transcription</keyword>
<keyword id="KW-0805">Transcription regulation</keyword>
<keyword id="KW-0862">Zinc</keyword>
<keyword id="KW-0863">Zinc-finger</keyword>
<protein>
    <recommendedName>
        <fullName>Zinc finger protein 574</fullName>
    </recommendedName>
</protein>